<organism>
    <name type="scientific">Escherichia coli O8 (strain IAI1)</name>
    <dbReference type="NCBI Taxonomy" id="585034"/>
    <lineage>
        <taxon>Bacteria</taxon>
        <taxon>Pseudomonadati</taxon>
        <taxon>Pseudomonadota</taxon>
        <taxon>Gammaproteobacteria</taxon>
        <taxon>Enterobacterales</taxon>
        <taxon>Enterobacteriaceae</taxon>
        <taxon>Escherichia</taxon>
    </lineage>
</organism>
<reference key="1">
    <citation type="journal article" date="2009" name="PLoS Genet.">
        <title>Organised genome dynamics in the Escherichia coli species results in highly diverse adaptive paths.</title>
        <authorList>
            <person name="Touchon M."/>
            <person name="Hoede C."/>
            <person name="Tenaillon O."/>
            <person name="Barbe V."/>
            <person name="Baeriswyl S."/>
            <person name="Bidet P."/>
            <person name="Bingen E."/>
            <person name="Bonacorsi S."/>
            <person name="Bouchier C."/>
            <person name="Bouvet O."/>
            <person name="Calteau A."/>
            <person name="Chiapello H."/>
            <person name="Clermont O."/>
            <person name="Cruveiller S."/>
            <person name="Danchin A."/>
            <person name="Diard M."/>
            <person name="Dossat C."/>
            <person name="Karoui M.E."/>
            <person name="Frapy E."/>
            <person name="Garry L."/>
            <person name="Ghigo J.M."/>
            <person name="Gilles A.M."/>
            <person name="Johnson J."/>
            <person name="Le Bouguenec C."/>
            <person name="Lescat M."/>
            <person name="Mangenot S."/>
            <person name="Martinez-Jehanne V."/>
            <person name="Matic I."/>
            <person name="Nassif X."/>
            <person name="Oztas S."/>
            <person name="Petit M.A."/>
            <person name="Pichon C."/>
            <person name="Rouy Z."/>
            <person name="Ruf C.S."/>
            <person name="Schneider D."/>
            <person name="Tourret J."/>
            <person name="Vacherie B."/>
            <person name="Vallenet D."/>
            <person name="Medigue C."/>
            <person name="Rocha E.P.C."/>
            <person name="Denamur E."/>
        </authorList>
    </citation>
    <scope>NUCLEOTIDE SEQUENCE [LARGE SCALE GENOMIC DNA]</scope>
    <source>
        <strain>IAI1</strain>
    </source>
</reference>
<gene>
    <name evidence="1" type="primary">secA</name>
    <name type="ordered locus">ECIAI1_0098</name>
</gene>
<dbReference type="EC" id="7.4.2.8" evidence="1"/>
<dbReference type="EMBL" id="CU928160">
    <property type="protein sequence ID" value="CAQ96987.1"/>
    <property type="molecule type" value="Genomic_DNA"/>
</dbReference>
<dbReference type="RefSeq" id="WP_000905789.1">
    <property type="nucleotide sequence ID" value="NC_011741.1"/>
</dbReference>
<dbReference type="SMR" id="B7M141"/>
<dbReference type="GeneID" id="93777336"/>
<dbReference type="KEGG" id="ecr:ECIAI1_0098"/>
<dbReference type="HOGENOM" id="CLU_005314_3_0_6"/>
<dbReference type="GO" id="GO:0031522">
    <property type="term" value="C:cell envelope Sec protein transport complex"/>
    <property type="evidence" value="ECO:0007669"/>
    <property type="project" value="TreeGrafter"/>
</dbReference>
<dbReference type="GO" id="GO:0005829">
    <property type="term" value="C:cytosol"/>
    <property type="evidence" value="ECO:0007669"/>
    <property type="project" value="TreeGrafter"/>
</dbReference>
<dbReference type="GO" id="GO:0005886">
    <property type="term" value="C:plasma membrane"/>
    <property type="evidence" value="ECO:0007669"/>
    <property type="project" value="UniProtKB-SubCell"/>
</dbReference>
<dbReference type="GO" id="GO:0005524">
    <property type="term" value="F:ATP binding"/>
    <property type="evidence" value="ECO:0007669"/>
    <property type="project" value="UniProtKB-UniRule"/>
</dbReference>
<dbReference type="GO" id="GO:0046872">
    <property type="term" value="F:metal ion binding"/>
    <property type="evidence" value="ECO:0007669"/>
    <property type="project" value="UniProtKB-KW"/>
</dbReference>
<dbReference type="GO" id="GO:0008564">
    <property type="term" value="F:protein-exporting ATPase activity"/>
    <property type="evidence" value="ECO:0007669"/>
    <property type="project" value="UniProtKB-EC"/>
</dbReference>
<dbReference type="GO" id="GO:0065002">
    <property type="term" value="P:intracellular protein transmembrane transport"/>
    <property type="evidence" value="ECO:0007669"/>
    <property type="project" value="UniProtKB-UniRule"/>
</dbReference>
<dbReference type="GO" id="GO:0017038">
    <property type="term" value="P:protein import"/>
    <property type="evidence" value="ECO:0007669"/>
    <property type="project" value="InterPro"/>
</dbReference>
<dbReference type="GO" id="GO:0006605">
    <property type="term" value="P:protein targeting"/>
    <property type="evidence" value="ECO:0007669"/>
    <property type="project" value="UniProtKB-UniRule"/>
</dbReference>
<dbReference type="GO" id="GO:0043952">
    <property type="term" value="P:protein transport by the Sec complex"/>
    <property type="evidence" value="ECO:0007669"/>
    <property type="project" value="TreeGrafter"/>
</dbReference>
<dbReference type="CDD" id="cd17928">
    <property type="entry name" value="DEXDc_SecA"/>
    <property type="match status" value="1"/>
</dbReference>
<dbReference type="CDD" id="cd18803">
    <property type="entry name" value="SF2_C_secA"/>
    <property type="match status" value="1"/>
</dbReference>
<dbReference type="FunFam" id="1.10.3060.10:FF:000001">
    <property type="entry name" value="Preprotein translocase subunit SecA"/>
    <property type="match status" value="1"/>
</dbReference>
<dbReference type="FunFam" id="3.40.50.300:FF:000081">
    <property type="entry name" value="Preprotein translocase subunit SecA"/>
    <property type="match status" value="1"/>
</dbReference>
<dbReference type="FunFam" id="3.40.50.300:FF:000113">
    <property type="entry name" value="Preprotein translocase subunit SecA"/>
    <property type="match status" value="1"/>
</dbReference>
<dbReference type="FunFam" id="3.90.1440.10:FF:000001">
    <property type="entry name" value="Preprotein translocase subunit SecA"/>
    <property type="match status" value="1"/>
</dbReference>
<dbReference type="Gene3D" id="1.10.3060.10">
    <property type="entry name" value="Helical scaffold and wing domains of SecA"/>
    <property type="match status" value="1"/>
</dbReference>
<dbReference type="Gene3D" id="3.40.50.300">
    <property type="entry name" value="P-loop containing nucleotide triphosphate hydrolases"/>
    <property type="match status" value="2"/>
</dbReference>
<dbReference type="Gene3D" id="3.90.1440.10">
    <property type="entry name" value="SecA, preprotein cross-linking domain"/>
    <property type="match status" value="1"/>
</dbReference>
<dbReference type="HAMAP" id="MF_01382">
    <property type="entry name" value="SecA"/>
    <property type="match status" value="1"/>
</dbReference>
<dbReference type="InterPro" id="IPR014001">
    <property type="entry name" value="Helicase_ATP-bd"/>
</dbReference>
<dbReference type="InterPro" id="IPR001650">
    <property type="entry name" value="Helicase_C-like"/>
</dbReference>
<dbReference type="InterPro" id="IPR027417">
    <property type="entry name" value="P-loop_NTPase"/>
</dbReference>
<dbReference type="InterPro" id="IPR004027">
    <property type="entry name" value="SEC_C_motif"/>
</dbReference>
<dbReference type="InterPro" id="IPR000185">
    <property type="entry name" value="SecA"/>
</dbReference>
<dbReference type="InterPro" id="IPR020937">
    <property type="entry name" value="SecA_CS"/>
</dbReference>
<dbReference type="InterPro" id="IPR011115">
    <property type="entry name" value="SecA_DEAD"/>
</dbReference>
<dbReference type="InterPro" id="IPR014018">
    <property type="entry name" value="SecA_motor_DEAD"/>
</dbReference>
<dbReference type="InterPro" id="IPR011130">
    <property type="entry name" value="SecA_preprotein_X-link_dom"/>
</dbReference>
<dbReference type="InterPro" id="IPR044722">
    <property type="entry name" value="SecA_SF2_C"/>
</dbReference>
<dbReference type="InterPro" id="IPR011116">
    <property type="entry name" value="SecA_Wing/Scaffold"/>
</dbReference>
<dbReference type="InterPro" id="IPR036266">
    <property type="entry name" value="SecA_Wing/Scaffold_sf"/>
</dbReference>
<dbReference type="InterPro" id="IPR036670">
    <property type="entry name" value="SecA_X-link_sf"/>
</dbReference>
<dbReference type="NCBIfam" id="NF009538">
    <property type="entry name" value="PRK12904.1"/>
    <property type="match status" value="1"/>
</dbReference>
<dbReference type="NCBIfam" id="TIGR00963">
    <property type="entry name" value="secA"/>
    <property type="match status" value="1"/>
</dbReference>
<dbReference type="PANTHER" id="PTHR30612:SF0">
    <property type="entry name" value="CHLOROPLAST PROTEIN-TRANSPORTING ATPASE"/>
    <property type="match status" value="1"/>
</dbReference>
<dbReference type="PANTHER" id="PTHR30612">
    <property type="entry name" value="SECA INNER MEMBRANE COMPONENT OF SEC PROTEIN SECRETION SYSTEM"/>
    <property type="match status" value="1"/>
</dbReference>
<dbReference type="Pfam" id="PF21090">
    <property type="entry name" value="P-loop_SecA"/>
    <property type="match status" value="1"/>
</dbReference>
<dbReference type="Pfam" id="PF02810">
    <property type="entry name" value="SEC-C"/>
    <property type="match status" value="1"/>
</dbReference>
<dbReference type="Pfam" id="PF07517">
    <property type="entry name" value="SecA_DEAD"/>
    <property type="match status" value="1"/>
</dbReference>
<dbReference type="Pfam" id="PF01043">
    <property type="entry name" value="SecA_PP_bind"/>
    <property type="match status" value="1"/>
</dbReference>
<dbReference type="Pfam" id="PF07516">
    <property type="entry name" value="SecA_SW"/>
    <property type="match status" value="1"/>
</dbReference>
<dbReference type="PRINTS" id="PR00906">
    <property type="entry name" value="SECA"/>
</dbReference>
<dbReference type="SMART" id="SM00957">
    <property type="entry name" value="SecA_DEAD"/>
    <property type="match status" value="1"/>
</dbReference>
<dbReference type="SMART" id="SM00958">
    <property type="entry name" value="SecA_PP_bind"/>
    <property type="match status" value="1"/>
</dbReference>
<dbReference type="SUPFAM" id="SSF81886">
    <property type="entry name" value="Helical scaffold and wing domains of SecA"/>
    <property type="match status" value="1"/>
</dbReference>
<dbReference type="SUPFAM" id="SSF52540">
    <property type="entry name" value="P-loop containing nucleoside triphosphate hydrolases"/>
    <property type="match status" value="2"/>
</dbReference>
<dbReference type="SUPFAM" id="SSF81767">
    <property type="entry name" value="Pre-protein crosslinking domain of SecA"/>
    <property type="match status" value="1"/>
</dbReference>
<dbReference type="PROSITE" id="PS01312">
    <property type="entry name" value="SECA"/>
    <property type="match status" value="1"/>
</dbReference>
<dbReference type="PROSITE" id="PS51196">
    <property type="entry name" value="SECA_MOTOR_DEAD"/>
    <property type="match status" value="1"/>
</dbReference>
<protein>
    <recommendedName>
        <fullName evidence="1">Protein translocase subunit SecA</fullName>
        <ecNumber evidence="1">7.4.2.8</ecNumber>
    </recommendedName>
</protein>
<comment type="function">
    <text evidence="1">Part of the Sec protein translocase complex. Interacts with the SecYEG preprotein conducting channel. Has a central role in coupling the hydrolysis of ATP to the transfer of proteins into and across the cell membrane, serving both as a receptor for the preprotein-SecB complex and as an ATP-driven molecular motor driving the stepwise translocation of polypeptide chains across the membrane.</text>
</comment>
<comment type="catalytic activity">
    <reaction evidence="1">
        <text>ATP + H2O + cellular proteinSide 1 = ADP + phosphate + cellular proteinSide 2.</text>
        <dbReference type="EC" id="7.4.2.8"/>
    </reaction>
</comment>
<comment type="cofactor">
    <cofactor evidence="1">
        <name>Zn(2+)</name>
        <dbReference type="ChEBI" id="CHEBI:29105"/>
    </cofactor>
    <text evidence="1">May bind 1 zinc ion per subunit.</text>
</comment>
<comment type="subunit">
    <text evidence="1">Monomer and homodimer. Part of the essential Sec protein translocation apparatus which comprises SecA, SecYEG and auxiliary proteins SecDF-YajC and YidC.</text>
</comment>
<comment type="subcellular location">
    <subcellularLocation>
        <location evidence="1">Cell inner membrane</location>
        <topology evidence="1">Peripheral membrane protein</topology>
        <orientation evidence="1">Cytoplasmic side</orientation>
    </subcellularLocation>
    <subcellularLocation>
        <location evidence="1">Cytoplasm</location>
    </subcellularLocation>
    <text evidence="1">Distribution is 50-50.</text>
</comment>
<comment type="induction">
    <text evidence="1">Repressed under conditions of excess protein secretion capacity and derepressed when protein secretion becomes limiting. This is regulated by SecM.</text>
</comment>
<comment type="similarity">
    <text evidence="1">Belongs to the SecA family.</text>
</comment>
<sequence>MLIKLLTKVFGSRNDRTLRRMRKVVNIINAMEPEMEKLSDEELKGKTAEFRARLEKGEVLENLIPEAFAVVREASKRVFGMRHFDVQLLGGMVLNERCIAEMRTGEGKTLTATLPAYLNALTGKGVHVVTVNDYLAQRDAENNRPLFEFLGLTVGINLPGMPAPAKREAYAADITYGTNNEYGFDYLRDNMAFSPEERVQRKLHYALVDEVDSILIDEARTPLIISGPAEDSSEMYKRVNKIIPHLIRQEKEDSETFQGEGHFSVDEKSRQVNLTERGLVLIEELLVKEGIMDEGESLYSPANIMLMHHVTAALRAHALFTRDVDYIVKDGEVIIVDEHTGRTMQGRRWSDGLHQAVEAKEGVQIQNENQTLASITFQNYFRLYEKLAGMTGTADTEAFEFSSIYKLDTVVVPTNRPMIRKDLPDLVYMTEAEKIQAIIEDIKERTAKGQPVLVGTISIEKSELVSNELTKAGIKHNVLNAKFHANEAAIVAQAGYPAAVTIATNMAGRGTDIVLGGSWQAEVAALENPTAEQIEKIKADWQVRHDAVLEAGGLHIIGTERHESRRIDNQLRGRSGRQGDAGSSRFYLSMEDALMRIFASDRVSGMMRKLGMKPGEAIEHPWVTKAIANAQRKVESRNFDIRKQLLEYDDVANDQRRAIYSQRNELLDVSDVSETINSIREDVFKATIDAYIPPQSLEEMWDIPGLQERLKNDFDLDLPIAEWLDKEPELHEETLRERILAQSIEVYQRKEEVVGAEMMRHFEKGVMLQTLDSLWKEHLAAMDYLRQGIHLRGYAQKDPKQEYKRESFSMFAAMLESLKYEVISTLSKVQVRMPEEVEELEQQRRMEAERLAQMQQLSHQDDDSAAAAALAAQTGERKVGRNDPCPCGSGKKYKQCHGRLQ</sequence>
<proteinExistence type="inferred from homology"/>
<keyword id="KW-0067">ATP-binding</keyword>
<keyword id="KW-0997">Cell inner membrane</keyword>
<keyword id="KW-1003">Cell membrane</keyword>
<keyword id="KW-0963">Cytoplasm</keyword>
<keyword id="KW-0472">Membrane</keyword>
<keyword id="KW-0479">Metal-binding</keyword>
<keyword id="KW-0547">Nucleotide-binding</keyword>
<keyword id="KW-0653">Protein transport</keyword>
<keyword id="KW-1278">Translocase</keyword>
<keyword id="KW-0811">Translocation</keyword>
<keyword id="KW-0813">Transport</keyword>
<keyword id="KW-0862">Zinc</keyword>
<name>SECA_ECO8A</name>
<feature type="chain" id="PRO_1000145008" description="Protein translocase subunit SecA">
    <location>
        <begin position="1"/>
        <end position="901"/>
    </location>
</feature>
<feature type="region of interest" description="Disordered" evidence="2">
    <location>
        <begin position="859"/>
        <end position="901"/>
    </location>
</feature>
<feature type="compositionally biased region" description="Basic residues" evidence="2">
    <location>
        <begin position="891"/>
        <end position="901"/>
    </location>
</feature>
<feature type="binding site" evidence="1">
    <location>
        <position position="87"/>
    </location>
    <ligand>
        <name>ATP</name>
        <dbReference type="ChEBI" id="CHEBI:30616"/>
    </ligand>
</feature>
<feature type="binding site" evidence="1">
    <location>
        <begin position="105"/>
        <end position="109"/>
    </location>
    <ligand>
        <name>ATP</name>
        <dbReference type="ChEBI" id="CHEBI:30616"/>
    </ligand>
</feature>
<feature type="binding site" evidence="1">
    <location>
        <position position="512"/>
    </location>
    <ligand>
        <name>ATP</name>
        <dbReference type="ChEBI" id="CHEBI:30616"/>
    </ligand>
</feature>
<feature type="binding site" evidence="1">
    <location>
        <position position="885"/>
    </location>
    <ligand>
        <name>Zn(2+)</name>
        <dbReference type="ChEBI" id="CHEBI:29105"/>
    </ligand>
</feature>
<feature type="binding site" evidence="1">
    <location>
        <position position="887"/>
    </location>
    <ligand>
        <name>Zn(2+)</name>
        <dbReference type="ChEBI" id="CHEBI:29105"/>
    </ligand>
</feature>
<feature type="binding site" evidence="1">
    <location>
        <position position="896"/>
    </location>
    <ligand>
        <name>Zn(2+)</name>
        <dbReference type="ChEBI" id="CHEBI:29105"/>
    </ligand>
</feature>
<feature type="binding site" evidence="1">
    <location>
        <position position="897"/>
    </location>
    <ligand>
        <name>Zn(2+)</name>
        <dbReference type="ChEBI" id="CHEBI:29105"/>
    </ligand>
</feature>
<evidence type="ECO:0000255" key="1">
    <source>
        <dbReference type="HAMAP-Rule" id="MF_01382"/>
    </source>
</evidence>
<evidence type="ECO:0000256" key="2">
    <source>
        <dbReference type="SAM" id="MobiDB-lite"/>
    </source>
</evidence>
<accession>B7M141</accession>